<feature type="chain" id="PRO_1000204863" description="Proteasome subunit alpha">
    <location>
        <begin position="1"/>
        <end position="241"/>
    </location>
</feature>
<proteinExistence type="inferred from homology"/>
<gene>
    <name evidence="1" type="primary">psmA</name>
    <name type="ordered locus">YN1551_1445</name>
</gene>
<organism>
    <name type="scientific">Saccharolobus islandicus (strain Y.N.15.51 / Yellowstone #2)</name>
    <name type="common">Sulfolobus islandicus</name>
    <dbReference type="NCBI Taxonomy" id="419942"/>
    <lineage>
        <taxon>Archaea</taxon>
        <taxon>Thermoproteota</taxon>
        <taxon>Thermoprotei</taxon>
        <taxon>Sulfolobales</taxon>
        <taxon>Sulfolobaceae</taxon>
        <taxon>Saccharolobus</taxon>
    </lineage>
</organism>
<sequence length="241" mass="26535">MAFGPAAMGYDRAITIFSPDGSLYQVDYAFEAVKKGWTAIGIKSKSGVVIASEKRKAQSLLDVDSIEKVFLIDDHVGCSFAGLASDGRVLIDYARNIALQHRLIYDEPVSIDYLTKSVADVKQMYTQHGGVRPFGVALVIAGIDKSVPKLYMTEPSGQYMPYQAVAIGQGYYTATEFLEKNYKEDLTIEDTILLALKALSATLKPNEKLTPNTVEIGYASTQTGLFLKMTSEDKNMYLQKL</sequence>
<dbReference type="EMBL" id="CP001404">
    <property type="protein sequence ID" value="ACP48536.1"/>
    <property type="molecule type" value="Genomic_DNA"/>
</dbReference>
<dbReference type="RefSeq" id="WP_012711401.1">
    <property type="nucleotide sequence ID" value="NC_012623.1"/>
</dbReference>
<dbReference type="SMR" id="C3NHC6"/>
<dbReference type="GeneID" id="84061723"/>
<dbReference type="KEGG" id="sin:YN1551_1445"/>
<dbReference type="HOGENOM" id="CLU_035750_4_1_2"/>
<dbReference type="Proteomes" id="UP000006818">
    <property type="component" value="Chromosome"/>
</dbReference>
<dbReference type="GO" id="GO:0005737">
    <property type="term" value="C:cytoplasm"/>
    <property type="evidence" value="ECO:0007669"/>
    <property type="project" value="UniProtKB-SubCell"/>
</dbReference>
<dbReference type="GO" id="GO:0019773">
    <property type="term" value="C:proteasome core complex, alpha-subunit complex"/>
    <property type="evidence" value="ECO:0000250"/>
    <property type="project" value="UniProtKB"/>
</dbReference>
<dbReference type="GO" id="GO:0004298">
    <property type="term" value="F:threonine-type endopeptidase activity"/>
    <property type="evidence" value="ECO:0007669"/>
    <property type="project" value="InterPro"/>
</dbReference>
<dbReference type="GO" id="GO:0010498">
    <property type="term" value="P:proteasomal protein catabolic process"/>
    <property type="evidence" value="ECO:0007669"/>
    <property type="project" value="UniProtKB-UniRule"/>
</dbReference>
<dbReference type="GO" id="GO:0006511">
    <property type="term" value="P:ubiquitin-dependent protein catabolic process"/>
    <property type="evidence" value="ECO:0007669"/>
    <property type="project" value="InterPro"/>
</dbReference>
<dbReference type="CDD" id="cd03756">
    <property type="entry name" value="proteasome_alpha_archeal"/>
    <property type="match status" value="1"/>
</dbReference>
<dbReference type="FunFam" id="3.60.20.10:FF:000004">
    <property type="entry name" value="Proteasome subunit alpha type-4"/>
    <property type="match status" value="1"/>
</dbReference>
<dbReference type="Gene3D" id="3.60.20.10">
    <property type="entry name" value="Glutamine Phosphoribosylpyrophosphate, subunit 1, domain 1"/>
    <property type="match status" value="1"/>
</dbReference>
<dbReference type="HAMAP" id="MF_00289_A">
    <property type="entry name" value="Proteasome_A_A"/>
    <property type="match status" value="1"/>
</dbReference>
<dbReference type="InterPro" id="IPR029055">
    <property type="entry name" value="Ntn_hydrolases_N"/>
</dbReference>
<dbReference type="InterPro" id="IPR050115">
    <property type="entry name" value="Proteasome_alpha"/>
</dbReference>
<dbReference type="InterPro" id="IPR023332">
    <property type="entry name" value="Proteasome_alpha-type"/>
</dbReference>
<dbReference type="InterPro" id="IPR019982">
    <property type="entry name" value="Proteasome_asu_arc"/>
</dbReference>
<dbReference type="InterPro" id="IPR000426">
    <property type="entry name" value="Proteasome_asu_N"/>
</dbReference>
<dbReference type="InterPro" id="IPR001353">
    <property type="entry name" value="Proteasome_sua/b"/>
</dbReference>
<dbReference type="NCBIfam" id="TIGR03633">
    <property type="entry name" value="arc_protsome_A"/>
    <property type="match status" value="1"/>
</dbReference>
<dbReference type="NCBIfam" id="NF003075">
    <property type="entry name" value="PRK03996.1"/>
    <property type="match status" value="1"/>
</dbReference>
<dbReference type="PANTHER" id="PTHR11599">
    <property type="entry name" value="PROTEASOME SUBUNIT ALPHA/BETA"/>
    <property type="match status" value="1"/>
</dbReference>
<dbReference type="Pfam" id="PF00227">
    <property type="entry name" value="Proteasome"/>
    <property type="match status" value="1"/>
</dbReference>
<dbReference type="Pfam" id="PF10584">
    <property type="entry name" value="Proteasome_A_N"/>
    <property type="match status" value="1"/>
</dbReference>
<dbReference type="SMART" id="SM00948">
    <property type="entry name" value="Proteasome_A_N"/>
    <property type="match status" value="1"/>
</dbReference>
<dbReference type="SUPFAM" id="SSF56235">
    <property type="entry name" value="N-terminal nucleophile aminohydrolases (Ntn hydrolases)"/>
    <property type="match status" value="1"/>
</dbReference>
<dbReference type="PROSITE" id="PS00388">
    <property type="entry name" value="PROTEASOME_ALPHA_1"/>
    <property type="match status" value="1"/>
</dbReference>
<dbReference type="PROSITE" id="PS51475">
    <property type="entry name" value="PROTEASOME_ALPHA_2"/>
    <property type="match status" value="1"/>
</dbReference>
<reference key="1">
    <citation type="journal article" date="2009" name="Proc. Natl. Acad. Sci. U.S.A.">
        <title>Biogeography of the Sulfolobus islandicus pan-genome.</title>
        <authorList>
            <person name="Reno M.L."/>
            <person name="Held N.L."/>
            <person name="Fields C.J."/>
            <person name="Burke P.V."/>
            <person name="Whitaker R.J."/>
        </authorList>
    </citation>
    <scope>NUCLEOTIDE SEQUENCE [LARGE SCALE GENOMIC DNA]</scope>
    <source>
        <strain>Y.N.15.51 / Yellowstone #2</strain>
    </source>
</reference>
<accession>C3NHC6</accession>
<keyword id="KW-0963">Cytoplasm</keyword>
<keyword id="KW-0647">Proteasome</keyword>
<evidence type="ECO:0000255" key="1">
    <source>
        <dbReference type="HAMAP-Rule" id="MF_00289"/>
    </source>
</evidence>
<name>PSA_SACI1</name>
<comment type="function">
    <text evidence="1">Component of the proteasome core, a large protease complex with broad specificity involved in protein degradation.</text>
</comment>
<comment type="activity regulation">
    <text evidence="1">The formation of the proteasomal ATPase PAN-20S proteasome complex, via the docking of the C-termini of PAN into the intersubunit pockets in the alpha-rings, triggers opening of the gate for substrate entry. Interconversion between the open-gate and close-gate conformations leads to a dynamic regulation of the 20S proteasome proteolysis activity.</text>
</comment>
<comment type="subunit">
    <text evidence="1">The 20S proteasome core is composed of 14 alpha and 14 beta subunits that assemble into four stacked heptameric rings, resulting in a barrel-shaped structure. The two inner rings, each composed of seven catalytic beta subunits, are sandwiched by two outer rings, each composed of seven alpha subunits. The catalytic chamber with the active sites is on the inside of the barrel. Has a gated structure, the ends of the cylinder being occluded by the N-termini of the alpha-subunits. Is capped at one or both ends by the proteasome regulatory ATPase, PAN.</text>
</comment>
<comment type="subcellular location">
    <subcellularLocation>
        <location evidence="1">Cytoplasm</location>
    </subcellularLocation>
</comment>
<comment type="similarity">
    <text evidence="1">Belongs to the peptidase T1A family.</text>
</comment>
<protein>
    <recommendedName>
        <fullName evidence="1">Proteasome subunit alpha</fullName>
    </recommendedName>
    <alternativeName>
        <fullName evidence="1">20S proteasome alpha subunit</fullName>
    </alternativeName>
    <alternativeName>
        <fullName evidence="1">Proteasome core protein PsmA</fullName>
    </alternativeName>
</protein>